<dbReference type="EC" id="5.6.2.-" evidence="10 12"/>
<dbReference type="EMBL" id="U41059">
    <property type="protein sequence ID" value="AAA96963.1"/>
    <property type="molecule type" value="Genomic_DNA"/>
</dbReference>
<dbReference type="EMBL" id="AE009439">
    <property type="protein sequence ID" value="AAM01266.1"/>
    <property type="molecule type" value="Genomic_DNA"/>
</dbReference>
<dbReference type="PIR" id="T18550">
    <property type="entry name" value="T18550"/>
</dbReference>
<dbReference type="RefSeq" id="WP_011018421.1">
    <property type="nucleotide sequence ID" value="NC_003551.1"/>
</dbReference>
<dbReference type="SMR" id="F1SVH1"/>
<dbReference type="STRING" id="190192.MK0049"/>
<dbReference type="PaxDb" id="190192-MK0049"/>
<dbReference type="EnsemblBacteria" id="AAM01266">
    <property type="protein sequence ID" value="AAM01266"/>
    <property type="gene ID" value="MK0049"/>
</dbReference>
<dbReference type="GeneID" id="1477352"/>
<dbReference type="KEGG" id="mka:MK0049"/>
<dbReference type="PATRIC" id="fig|190192.8.peg.49"/>
<dbReference type="HOGENOM" id="CLU_002886_0_0_2"/>
<dbReference type="InParanoid" id="F1SVH1"/>
<dbReference type="Proteomes" id="UP000001826">
    <property type="component" value="Chromosome"/>
</dbReference>
<dbReference type="GO" id="GO:0005737">
    <property type="term" value="C:cytoplasm"/>
    <property type="evidence" value="ECO:0007669"/>
    <property type="project" value="UniProtKB-SubCell"/>
</dbReference>
<dbReference type="GO" id="GO:0005524">
    <property type="term" value="F:ATP binding"/>
    <property type="evidence" value="ECO:0007669"/>
    <property type="project" value="UniProtKB-KW"/>
</dbReference>
<dbReference type="GO" id="GO:0003677">
    <property type="term" value="F:DNA binding"/>
    <property type="evidence" value="ECO:0007669"/>
    <property type="project" value="InterPro"/>
</dbReference>
<dbReference type="GO" id="GO:0160097">
    <property type="term" value="F:reverse gyrase activity"/>
    <property type="evidence" value="ECO:0000314"/>
    <property type="project" value="UniProtKB"/>
</dbReference>
<dbReference type="GO" id="GO:0008270">
    <property type="term" value="F:zinc ion binding"/>
    <property type="evidence" value="ECO:0007669"/>
    <property type="project" value="UniProtKB-KW"/>
</dbReference>
<dbReference type="GO" id="GO:0006265">
    <property type="term" value="P:DNA topological change"/>
    <property type="evidence" value="ECO:0000314"/>
    <property type="project" value="UniProtKB"/>
</dbReference>
<dbReference type="CDD" id="cd17924">
    <property type="entry name" value="DDXDc_reverse_gyrase"/>
    <property type="match status" value="1"/>
</dbReference>
<dbReference type="CDD" id="cd03361">
    <property type="entry name" value="TOPRIM_TopoIA_RevGyr"/>
    <property type="match status" value="1"/>
</dbReference>
<dbReference type="Gene3D" id="2.60.510.20">
    <property type="match status" value="1"/>
</dbReference>
<dbReference type="Gene3D" id="3.30.56.120">
    <property type="match status" value="1"/>
</dbReference>
<dbReference type="Gene3D" id="3.40.50.140">
    <property type="match status" value="2"/>
</dbReference>
<dbReference type="Gene3D" id="3.40.50.300">
    <property type="entry name" value="P-loop containing nucleotide triphosphate hydrolases"/>
    <property type="match status" value="3"/>
</dbReference>
<dbReference type="Gene3D" id="2.20.20.30">
    <property type="entry name" value="reverse gyrase domain"/>
    <property type="match status" value="1"/>
</dbReference>
<dbReference type="Gene3D" id="1.10.460.10">
    <property type="entry name" value="Topoisomerase I, domain 2"/>
    <property type="match status" value="2"/>
</dbReference>
<dbReference type="InterPro" id="IPR011545">
    <property type="entry name" value="DEAD/DEAH_box_helicase_dom"/>
</dbReference>
<dbReference type="InterPro" id="IPR014001">
    <property type="entry name" value="Helicase_ATP-bd"/>
</dbReference>
<dbReference type="InterPro" id="IPR001650">
    <property type="entry name" value="Helicase_C-like"/>
</dbReference>
<dbReference type="InterPro" id="IPR027417">
    <property type="entry name" value="P-loop_NTPase"/>
</dbReference>
<dbReference type="InterPro" id="IPR005736">
    <property type="entry name" value="Reverse_gyrase"/>
</dbReference>
<dbReference type="InterPro" id="IPR003601">
    <property type="entry name" value="Topo_IA_2"/>
</dbReference>
<dbReference type="InterPro" id="IPR013497">
    <property type="entry name" value="Topo_IA_cen"/>
</dbReference>
<dbReference type="InterPro" id="IPR013824">
    <property type="entry name" value="Topo_IA_cen_sub1"/>
</dbReference>
<dbReference type="InterPro" id="IPR023405">
    <property type="entry name" value="Topo_IA_core_domain"/>
</dbReference>
<dbReference type="InterPro" id="IPR006171">
    <property type="entry name" value="TOPRIM_dom"/>
</dbReference>
<dbReference type="InterPro" id="IPR034142">
    <property type="entry name" value="TOPRIM_RevGyr"/>
</dbReference>
<dbReference type="InterPro" id="IPR040569">
    <property type="entry name" value="Znf_Rg"/>
</dbReference>
<dbReference type="NCBIfam" id="TIGR01054">
    <property type="entry name" value="rgy"/>
    <property type="match status" value="1"/>
</dbReference>
<dbReference type="PANTHER" id="PTHR43505">
    <property type="entry name" value="REVERSE GYRASE"/>
    <property type="match status" value="1"/>
</dbReference>
<dbReference type="PANTHER" id="PTHR43505:SF1">
    <property type="entry name" value="REVERSE GYRASE"/>
    <property type="match status" value="1"/>
</dbReference>
<dbReference type="Pfam" id="PF00270">
    <property type="entry name" value="DEAD"/>
    <property type="match status" value="1"/>
</dbReference>
<dbReference type="Pfam" id="PF00271">
    <property type="entry name" value="Helicase_C"/>
    <property type="match status" value="1"/>
</dbReference>
<dbReference type="Pfam" id="PF01751">
    <property type="entry name" value="Toprim"/>
    <property type="match status" value="1"/>
</dbReference>
<dbReference type="PRINTS" id="PR00417">
    <property type="entry name" value="PRTPISMRASEI"/>
</dbReference>
<dbReference type="SMART" id="SM00487">
    <property type="entry name" value="DEXDc"/>
    <property type="match status" value="1"/>
</dbReference>
<dbReference type="SMART" id="SM00490">
    <property type="entry name" value="HELICc"/>
    <property type="match status" value="1"/>
</dbReference>
<dbReference type="SMART" id="SM00436">
    <property type="entry name" value="TOP1Bc"/>
    <property type="match status" value="1"/>
</dbReference>
<dbReference type="SMART" id="SM00493">
    <property type="entry name" value="TOPRIM"/>
    <property type="match status" value="1"/>
</dbReference>
<dbReference type="SUPFAM" id="SSF52540">
    <property type="entry name" value="P-loop containing nucleoside triphosphate hydrolases"/>
    <property type="match status" value="2"/>
</dbReference>
<dbReference type="SUPFAM" id="SSF56712">
    <property type="entry name" value="Prokaryotic type I DNA topoisomerase"/>
    <property type="match status" value="2"/>
</dbReference>
<dbReference type="PROSITE" id="PS51192">
    <property type="entry name" value="HELICASE_ATP_BIND_1"/>
    <property type="match status" value="1"/>
</dbReference>
<dbReference type="PROSITE" id="PS51194">
    <property type="entry name" value="HELICASE_CTER"/>
    <property type="match status" value="1"/>
</dbReference>
<dbReference type="PROSITE" id="PS52039">
    <property type="entry name" value="TOPO_IA_2"/>
    <property type="match status" value="1"/>
</dbReference>
<dbReference type="PROSITE" id="PS50880">
    <property type="entry name" value="TOPRIM"/>
    <property type="match status" value="1"/>
</dbReference>
<dbReference type="PROSITE" id="PS52037">
    <property type="entry name" value="ZF_RG_C"/>
    <property type="match status" value="1"/>
</dbReference>
<dbReference type="PROSITE" id="PS52036">
    <property type="entry name" value="ZF_RG_N"/>
    <property type="match status" value="1"/>
</dbReference>
<reference evidence="19" key="1">
    <citation type="journal article" date="1996" name="Proc. Natl. Acad. Sci. U.S.A.">
        <title>A two-subunit type I DNA topoisomerase (reverse gyrase) from an extreme hyperthermophile.</title>
        <authorList>
            <person name="Krah R."/>
            <person name="Kozyavkin S.A."/>
            <person name="Slesarev A.I."/>
            <person name="Gellert M."/>
        </authorList>
    </citation>
    <scope>NUCLEOTIDE SEQUENCE [GENOMIC DNA]</scope>
    <scope>PROTEIN SEQUENCE OF 2-14</scope>
</reference>
<reference evidence="20" key="2">
    <citation type="journal article" date="2002" name="Proc. Natl. Acad. Sci. U.S.A.">
        <title>The complete genome of hyperthermophile Methanopyrus kandleri AV19 and monophyly of archaeal methanogens.</title>
        <authorList>
            <person name="Slesarev A.I."/>
            <person name="Mezhevaya K.V."/>
            <person name="Makarova K.S."/>
            <person name="Polushin N.N."/>
            <person name="Shcherbinina O.V."/>
            <person name="Shakhova V.V."/>
            <person name="Belova G.I."/>
            <person name="Aravind L."/>
            <person name="Natale D.A."/>
            <person name="Rogozin I.B."/>
            <person name="Tatusov R.L."/>
            <person name="Wolf Y.I."/>
            <person name="Stetter K.O."/>
            <person name="Malykh A.G."/>
            <person name="Koonin E.V."/>
            <person name="Kozyavkin S.A."/>
        </authorList>
    </citation>
    <scope>NUCLEOTIDE SEQUENCE [LARGE SCALE GENOMIC DNA]</scope>
    <source>
        <strain>AV19 / DSM 6324 / JCM 9639 / NBRC 100938</strain>
    </source>
</reference>
<reference key="3">
    <citation type="journal article" date="1994" name="J. Biol. Chem.">
        <title>A reverse gyrase with an unusual structure. A type I DNA topoisomerase from the hyperthermophile Methanopyrus kandleri is a two-subunit protein.</title>
        <authorList>
            <person name="Kozyavkin S.A."/>
            <person name="Krah R."/>
            <person name="Gellert M."/>
            <person name="Stetter K.O."/>
            <person name="Lake J.A."/>
            <person name="Slesarev A.I."/>
        </authorList>
    </citation>
    <scope>FUNCTION</scope>
    <scope>CATALYTIC ACTIVITY</scope>
    <scope>REACTION MECHANISM</scope>
    <scope>SUBUNIT</scope>
    <scope>PROTEIN ABUNDANCE</scope>
    <scope>ATP-BINDING</scope>
    <source>
        <strain>AV19 / DSM 6324 / JCM 9639 / NBRC 100938</strain>
    </source>
</reference>
<reference key="4">
    <citation type="journal article" date="1997" name="J. Biol. Chem.">
        <title>Reverse gyrase from Methanopyrus kandleri. Reconstitution of an active extremozyme from its two recombinant subunits.</title>
        <authorList>
            <person name="Krah R."/>
            <person name="O'Dea M.H."/>
            <person name="Gellert M."/>
        </authorList>
    </citation>
    <scope>RECONSTITUTION OF ACTIVE ENZYME</scope>
    <scope>FUNCTION</scope>
    <scope>CATALYTIC ACTIVITY</scope>
    <scope>COFACTOR</scope>
    <scope>SUBUNIT</scope>
</reference>
<keyword id="KW-0067">ATP-binding</keyword>
<keyword id="KW-0963">Cytoplasm</keyword>
<keyword id="KW-0903">Direct protein sequencing</keyword>
<keyword id="KW-0413">Isomerase</keyword>
<keyword id="KW-0460">Magnesium</keyword>
<keyword id="KW-0479">Metal-binding</keyword>
<keyword id="KW-0547">Nucleotide-binding</keyword>
<keyword id="KW-1185">Reference proteome</keyword>
<keyword id="KW-0677">Repeat</keyword>
<keyword id="KW-0862">Zinc</keyword>
<keyword id="KW-0863">Zinc-finger</keyword>
<name>RGYRB_METKA</name>
<protein>
    <recommendedName>
        <fullName evidence="13">Reverse gyrase subunit B</fullName>
        <ecNumber evidence="10 12">5.6.2.-</ecNumber>
    </recommendedName>
    <alternativeName>
        <fullName evidence="17">Helicase-like/topoisomerase subunit of reverse gyrase</fullName>
    </alternativeName>
</protein>
<comment type="function">
    <text evidence="1 2 10">Modifies the topological state of DNA by introducing positive supercoils in an ATP-dependent process; dATP also allows positive supercoiling (PubMed:8157633). Increases the linking number in steps of +1 (PubMed:8157633). Only this subunit binds ATP, it does so in a DNA- and RgyA-independent manner (PubMed:8157633). Hydrolyzes ATP only in the presence of DNA (PubMed:8157633). The RgyA subunit transiently cleaves a single DNA strand and remains covalently bound to the 5' DNA end probably through a tyrosine residue. It changes linking number in steps of one, and nicks DNA preferentially at 5'-CNNN | 3'-sites with a strong preference for 4 pyrimidine residues (PubMed:8157633). There are about 1000 heterodimers per cell (PubMed:8157633). May be involved in rewinding the DNA strands in the regions of the chromosome that have opened up to allow transcription or replication (By similarity).</text>
</comment>
<comment type="function">
    <text evidence="12">This subunit expressed in E.coli only has DNA-dependent ATPase activity at 80 degrees Celsius (PubMed:9153263). Reverse gyrase activity is reconstituted after incubation at 80 degrees Celsius for 5 minutes, positive supercoiling requires ATP and Mg(2+) (PubMed:9153263). In the presence of ATP it binds and nicks substrate but does not make closed product (PubMed:9153263).</text>
</comment>
<comment type="catalytic activity">
    <reaction evidence="10 12">
        <text>ATP + H2O = ADP + phosphate + H(+)</text>
        <dbReference type="Rhea" id="RHEA:13065"/>
        <dbReference type="ChEBI" id="CHEBI:15377"/>
        <dbReference type="ChEBI" id="CHEBI:15378"/>
        <dbReference type="ChEBI" id="CHEBI:30616"/>
        <dbReference type="ChEBI" id="CHEBI:43474"/>
        <dbReference type="ChEBI" id="CHEBI:456216"/>
    </reaction>
</comment>
<comment type="cofactor">
    <cofactor evidence="1">
        <name>Zn(2+)</name>
        <dbReference type="ChEBI" id="CHEBI:29105"/>
    </cofactor>
    <text evidence="1">Binds 2 zinc ions per subunit.</text>
</comment>
<comment type="cofactor">
    <cofactor evidence="12">
        <name>Mg(2+)</name>
        <dbReference type="ChEBI" id="CHEBI:18420"/>
    </cofactor>
</comment>
<comment type="subunit">
    <text evidence="10 11 12">Heterodimer of an RgyrA and RgyrB subunit (PubMed:8157633, PubMed:9153263). The topoisomerase domain is shared between the two subunits (PubMed:8552584).</text>
</comment>
<comment type="subcellular location">
    <subcellularLocation>
        <location evidence="3">Cytoplasm</location>
    </subcellularLocation>
</comment>
<comment type="domain">
    <text evidence="16 18">Introduction of positive supercoils requires the cooperation of both the helicase-like and topoisomerase domains of the 2 subunits. The helicase-like domain probably does not directly unwind DNA, but more likely acts by driving ATP-dependent conformational changes within the whole enzyme. A beta hairpin in the 'latch' region of the N-terminal domain plays a regulatory role in the enzyme, repressing topoisomerase activity in the absence of ATP and preventing the enzyme from acting as an ATP-independent relaxing enzyme; it also helps to coordinate nucleotide hydrolysis by the ATPase domain with the supercoiling activity of the topoisomerase domain (PubMed:8157633, PubMed:9153263).</text>
</comment>
<comment type="PTM">
    <text evidence="11">The N-terminus is partially blocked (PubMed:8552584).</text>
</comment>
<comment type="miscellaneous">
    <text evidence="15">This enzyme is the only unique feature of hyperthermophilic bacteria/archaea known and seems to be essential for adaptation to life at high temperatures. It may play a role in stabilization of DNA at high temperatures.</text>
</comment>
<comment type="similarity">
    <text evidence="9 16">In the C-terminal section; belongs to the type IA topoisomerase family.</text>
</comment>
<comment type="similarity">
    <text evidence="15">In the N-terminal section; belongs to the DEAD box helicase family. DDVD subfamily.</text>
</comment>
<organism>
    <name type="scientific">Methanopyrus kandleri (strain AV19 / DSM 6324 / JCM 9639 / NBRC 100938)</name>
    <dbReference type="NCBI Taxonomy" id="190192"/>
    <lineage>
        <taxon>Archaea</taxon>
        <taxon>Methanobacteriati</taxon>
        <taxon>Methanobacteriota</taxon>
        <taxon>Methanomada group</taxon>
        <taxon>Methanopyri</taxon>
        <taxon>Methanopyrales</taxon>
        <taxon>Methanopyraceae</taxon>
        <taxon>Methanopyrus</taxon>
    </lineage>
</organism>
<evidence type="ECO:0000250" key="1">
    <source>
        <dbReference type="UniProtKB" id="O51934"/>
    </source>
</evidence>
<evidence type="ECO:0000250" key="2">
    <source>
        <dbReference type="UniProtKB" id="Q08582"/>
    </source>
</evidence>
<evidence type="ECO:0000250" key="3">
    <source>
        <dbReference type="UniProtKB" id="Q97ZZ8"/>
    </source>
</evidence>
<evidence type="ECO:0000255" key="4">
    <source>
        <dbReference type="PROSITE-ProRule" id="PRU00541"/>
    </source>
</evidence>
<evidence type="ECO:0000255" key="5">
    <source>
        <dbReference type="PROSITE-ProRule" id="PRU00542"/>
    </source>
</evidence>
<evidence type="ECO:0000255" key="6">
    <source>
        <dbReference type="PROSITE-ProRule" id="PRU00995"/>
    </source>
</evidence>
<evidence type="ECO:0000255" key="7">
    <source>
        <dbReference type="PROSITE-ProRule" id="PRU01380"/>
    </source>
</evidence>
<evidence type="ECO:0000255" key="8">
    <source>
        <dbReference type="PROSITE-ProRule" id="PRU01381"/>
    </source>
</evidence>
<evidence type="ECO:0000255" key="9">
    <source>
        <dbReference type="PROSITE-ProRule" id="PRU01383"/>
    </source>
</evidence>
<evidence type="ECO:0000269" key="10">
    <source>
    </source>
</evidence>
<evidence type="ECO:0000269" key="11">
    <source>
    </source>
</evidence>
<evidence type="ECO:0000269" key="12">
    <source>
    </source>
</evidence>
<evidence type="ECO:0000303" key="13">
    <source>
    </source>
</evidence>
<evidence type="ECO:0000303" key="14">
    <source>
    </source>
</evidence>
<evidence type="ECO:0000305" key="15"/>
<evidence type="ECO:0000305" key="16">
    <source>
    </source>
</evidence>
<evidence type="ECO:0000305" key="17">
    <source>
    </source>
</evidence>
<evidence type="ECO:0000305" key="18">
    <source>
    </source>
</evidence>
<evidence type="ECO:0000312" key="19">
    <source>
        <dbReference type="EMBL" id="AAA96963.1"/>
    </source>
</evidence>
<evidence type="ECO:0000312" key="20">
    <source>
        <dbReference type="EMBL" id="AAM01266.1"/>
    </source>
</evidence>
<accession>F1SVH1</accession>
<accession>Q49600</accession>
<accession>Q7LWW8</accession>
<feature type="initiator methionine" description="Removed" evidence="11">
    <location>
        <position position="1"/>
    </location>
</feature>
<feature type="chain" id="PRO_0000459353" description="Reverse gyrase subunit B">
    <location>
        <begin position="2"/>
        <end position="1221"/>
    </location>
</feature>
<feature type="domain" description="Helicase ATP-binding" evidence="4">
    <location>
        <begin position="165"/>
        <end position="400"/>
    </location>
</feature>
<feature type="domain" description="Helicase C-terminal" evidence="5">
    <location>
        <begin position="424"/>
        <end position="600"/>
    </location>
</feature>
<feature type="domain" description="Toprim" evidence="6">
    <location>
        <begin position="779"/>
        <end position="935"/>
    </location>
</feature>
<feature type="domain" description="Topo IA-type catalytic" evidence="9">
    <location>
        <begin position="953"/>
        <end position="1221"/>
    </location>
</feature>
<feature type="zinc finger region" description="RG N-terminal-type" evidence="7">
    <location>
        <begin position="56"/>
        <end position="97"/>
    </location>
</feature>
<feature type="zinc finger region" description="RG C-terminal-type" evidence="8">
    <location>
        <begin position="856"/>
        <end position="882"/>
    </location>
</feature>
<feature type="short sequence motif" description="DEAD box" evidence="4">
    <location>
        <begin position="284"/>
        <end position="287"/>
    </location>
</feature>
<feature type="binding site" evidence="1">
    <location>
        <position position="66"/>
    </location>
    <ligand>
        <name>Zn(2+)</name>
        <dbReference type="ChEBI" id="CHEBI:29105"/>
        <label>1</label>
    </ligand>
</feature>
<feature type="binding site" evidence="1">
    <location>
        <position position="69"/>
    </location>
    <ligand>
        <name>Zn(2+)</name>
        <dbReference type="ChEBI" id="CHEBI:29105"/>
        <label>1</label>
    </ligand>
</feature>
<feature type="binding site" evidence="1">
    <location>
        <position position="85"/>
    </location>
    <ligand>
        <name>Zn(2+)</name>
        <dbReference type="ChEBI" id="CHEBI:29105"/>
        <label>1</label>
    </ligand>
</feature>
<feature type="binding site" evidence="1">
    <location>
        <position position="88"/>
    </location>
    <ligand>
        <name>Zn(2+)</name>
        <dbReference type="ChEBI" id="CHEBI:29105"/>
        <label>1</label>
    </ligand>
</feature>
<feature type="binding site" evidence="1">
    <location>
        <position position="161"/>
    </location>
    <ligand>
        <name>ATP</name>
        <dbReference type="ChEBI" id="CHEBI:30616"/>
    </ligand>
</feature>
<feature type="binding site" evidence="4">
    <location>
        <begin position="178"/>
        <end position="185"/>
    </location>
    <ligand>
        <name>ATP</name>
        <dbReference type="ChEBI" id="CHEBI:30616"/>
    </ligand>
</feature>
<feature type="binding site" evidence="6">
    <location>
        <position position="785"/>
    </location>
    <ligand>
        <name>Mg(2+)</name>
        <dbReference type="ChEBI" id="CHEBI:18420"/>
        <note>catalytic</note>
    </ligand>
</feature>
<feature type="binding site" evidence="1">
    <location>
        <position position="859"/>
    </location>
    <ligand>
        <name>Zn(2+)</name>
        <dbReference type="ChEBI" id="CHEBI:29105"/>
        <label>2</label>
    </ligand>
</feature>
<feature type="binding site" evidence="1">
    <location>
        <position position="862"/>
    </location>
    <ligand>
        <name>Zn(2+)</name>
        <dbReference type="ChEBI" id="CHEBI:29105"/>
        <label>2</label>
    </ligand>
</feature>
<feature type="binding site" evidence="1">
    <location>
        <position position="872"/>
    </location>
    <ligand>
        <name>Zn(2+)</name>
        <dbReference type="ChEBI" id="CHEBI:29105"/>
        <label>2</label>
    </ligand>
</feature>
<feature type="binding site" evidence="1">
    <location>
        <position position="875"/>
    </location>
    <ligand>
        <name>Zn(2+)</name>
        <dbReference type="ChEBI" id="CHEBI:29105"/>
        <label>2</label>
    </ligand>
</feature>
<feature type="binding site" evidence="6">
    <location>
        <position position="904"/>
    </location>
    <ligand>
        <name>Mg(2+)</name>
        <dbReference type="ChEBI" id="CHEBI:18420"/>
        <note>catalytic</note>
    </ligand>
</feature>
<proteinExistence type="evidence at protein level"/>
<sequence length="1221" mass="138112">MVLKRAADMVPKGFRDLVEPILDDCADLEELADRVVETEMEPDEVRRRDVGNTDSNEPVAIFGSSCVLCGGDCSSVRLTSRIGICERCLPVDTETLREVLKEARKRHGYVGEALLMFILVERYSPDRVEEFFRRYVWPELFTEIVDRVFDRATGFRLYSAQRVWTRRLVKGCSFSILAPTGTGKTSWGSLVAAVFGHAGRRVYYLVPTTTLVRQVENRIKGFARDAELDVDVVAYHAAMPTQAKREALERISSGDFDVLITTAQFLVHRVEDLEKLNFDLILVDDVDAIIRGTGRNVDRVLRVAGLEQEEIDSAYRLATLRRRYYSLRDWLRSLEDRGDKRAERVREELREVEREIEELEELLKRVKKERDLARIVFMSATGAAAPSRRLAVVRELFDFEVGAGGEGLRNIQDIAVISEPSPEAVERIVRKAGVKGGLIFVPQRLPGEKKAREIVEELAEHLRSSGIEARAIHAGTPAEEREEAIDGFSEGDVDVLVAVASPYGVIVRGLDLPQAARYAVFYGVPRQRIRLTPREEDLKDPTYVASALSNLARLLDDRRARSRLEGVAGRLWRIIRRGTWIRERLEEAVEPLSLNTLMKLAKRDPEDIAEQLDVDRWLARHVQTLAEGVRELTRLLGDPDRVKALAEEATTVAVYEEGEEAYLEVPDLRTYIQASGRVSRLFAGGVTFGLSFVLCPEDERELRTLNGLIRRMSYTYGSEFEWRSYPKSLDMKEIGLELKEISDEELEELVRKVDEDRERVRKVLAGELKPEETGRLARSALMIVESPNKARMIASLFSQRPSRRRLNGGVAYEAAADGLHLTVVATQGHVADLVEEPGVHGVLRIDERWVPMYDVLGRCSECGEQVVGSEECPNCGGEVELKTPLLESIRELASEADVILIGTDPDTEGEKIGWDVFNYLGWTTAQVYRTEFHEVTRRGISEALKEESWKNVDAGRVSAQILRRVADRWIGFSLSQDLWDVFKHLEIKLGELPSGSRIEVRLDIPSGVEVVDFRRTFDEDSSVRSRSVRLRREGDEYVVRTRISRGGDVTYTATLLDPNRKLGDRNGVRPELVRVRASVNGEPVDPNVKLEPMTWLSAGRVQTPVLGWIIDRAREYRETEFYACRAEVPADDVTIRALIEELKVPRALTEKLDEATIRVLSKIAEEGPDAEFSEEEVGRFTETELFERKDGRYRLSEEGRKVLESEGVIGLMLHLAGVSGR</sequence>
<gene>
    <name evidence="14" type="primary">rgyB</name>
    <name type="ordered locus">MK0049</name>
</gene>